<reference key="1">
    <citation type="submission" date="2006-09" db="EMBL/GenBank/DDBJ databases">
        <title>Complete sequence of chromosome 1 of Shewanella sp. ANA-3.</title>
        <authorList>
            <person name="Copeland A."/>
            <person name="Lucas S."/>
            <person name="Lapidus A."/>
            <person name="Barry K."/>
            <person name="Detter J.C."/>
            <person name="Glavina del Rio T."/>
            <person name="Hammon N."/>
            <person name="Israni S."/>
            <person name="Dalin E."/>
            <person name="Tice H."/>
            <person name="Pitluck S."/>
            <person name="Chertkov O."/>
            <person name="Brettin T."/>
            <person name="Bruce D."/>
            <person name="Han C."/>
            <person name="Tapia R."/>
            <person name="Gilna P."/>
            <person name="Schmutz J."/>
            <person name="Larimer F."/>
            <person name="Land M."/>
            <person name="Hauser L."/>
            <person name="Kyrpides N."/>
            <person name="Kim E."/>
            <person name="Newman D."/>
            <person name="Salticov C."/>
            <person name="Konstantinidis K."/>
            <person name="Klappenback J."/>
            <person name="Tiedje J."/>
            <person name="Richardson P."/>
        </authorList>
    </citation>
    <scope>NUCLEOTIDE SEQUENCE [LARGE SCALE GENOMIC DNA]</scope>
    <source>
        <strain>ANA-3</strain>
    </source>
</reference>
<accession>A0KZT1</accession>
<protein>
    <recommendedName>
        <fullName evidence="1">Multifunctional CCA protein</fullName>
    </recommendedName>
    <domain>
        <recommendedName>
            <fullName evidence="1">CCA-adding enzyme</fullName>
            <ecNumber evidence="1">2.7.7.72</ecNumber>
        </recommendedName>
        <alternativeName>
            <fullName evidence="1">CCA tRNA nucleotidyltransferase</fullName>
        </alternativeName>
        <alternativeName>
            <fullName evidence="1">tRNA CCA-pyrophosphorylase</fullName>
        </alternativeName>
        <alternativeName>
            <fullName evidence="1">tRNA adenylyl-/cytidylyl-transferase</fullName>
        </alternativeName>
        <alternativeName>
            <fullName evidence="1">tRNA nucleotidyltransferase</fullName>
        </alternativeName>
        <alternativeName>
            <fullName evidence="1">tRNA-NT</fullName>
        </alternativeName>
    </domain>
    <domain>
        <recommendedName>
            <fullName evidence="1">2'-nucleotidase</fullName>
            <ecNumber evidence="1">3.1.3.-</ecNumber>
        </recommendedName>
    </domain>
    <domain>
        <recommendedName>
            <fullName evidence="1">2',3'-cyclic phosphodiesterase</fullName>
            <ecNumber evidence="1">3.1.4.-</ecNumber>
        </recommendedName>
    </domain>
    <domain>
        <recommendedName>
            <fullName evidence="1">Phosphatase</fullName>
            <ecNumber evidence="1">3.1.3.-</ecNumber>
        </recommendedName>
    </domain>
</protein>
<name>CCA_SHESA</name>
<keyword id="KW-0067">ATP-binding</keyword>
<keyword id="KW-0378">Hydrolase</keyword>
<keyword id="KW-0460">Magnesium</keyword>
<keyword id="KW-0479">Metal-binding</keyword>
<keyword id="KW-0511">Multifunctional enzyme</keyword>
<keyword id="KW-0533">Nickel</keyword>
<keyword id="KW-0547">Nucleotide-binding</keyword>
<keyword id="KW-0548">Nucleotidyltransferase</keyword>
<keyword id="KW-0692">RNA repair</keyword>
<keyword id="KW-0694">RNA-binding</keyword>
<keyword id="KW-0808">Transferase</keyword>
<keyword id="KW-0819">tRNA processing</keyword>
<comment type="function">
    <text evidence="1">Catalyzes the addition and repair of the essential 3'-terminal CCA sequence in tRNAs without using a nucleic acid template. Adds these three nucleotides in the order of C, C, and A to the tRNA nucleotide-73, using CTP and ATP as substrates and producing inorganic pyrophosphate. tRNA 3'-terminal CCA addition is required both for tRNA processing and repair. Also involved in tRNA surveillance by mediating tandem CCA addition to generate a CCACCA at the 3' terminus of unstable tRNAs. While stable tRNAs receive only 3'-terminal CCA, unstable tRNAs are marked with CCACCA and rapidly degraded.</text>
</comment>
<comment type="catalytic activity">
    <reaction evidence="1">
        <text>a tRNA precursor + 2 CTP + ATP = a tRNA with a 3' CCA end + 3 diphosphate</text>
        <dbReference type="Rhea" id="RHEA:14433"/>
        <dbReference type="Rhea" id="RHEA-COMP:10465"/>
        <dbReference type="Rhea" id="RHEA-COMP:10468"/>
        <dbReference type="ChEBI" id="CHEBI:30616"/>
        <dbReference type="ChEBI" id="CHEBI:33019"/>
        <dbReference type="ChEBI" id="CHEBI:37563"/>
        <dbReference type="ChEBI" id="CHEBI:74896"/>
        <dbReference type="ChEBI" id="CHEBI:83071"/>
        <dbReference type="EC" id="2.7.7.72"/>
    </reaction>
</comment>
<comment type="catalytic activity">
    <reaction evidence="1">
        <text>a tRNA with a 3' CCA end + 2 CTP + ATP = a tRNA with a 3' CCACCA end + 3 diphosphate</text>
        <dbReference type="Rhea" id="RHEA:76235"/>
        <dbReference type="Rhea" id="RHEA-COMP:10468"/>
        <dbReference type="Rhea" id="RHEA-COMP:18655"/>
        <dbReference type="ChEBI" id="CHEBI:30616"/>
        <dbReference type="ChEBI" id="CHEBI:33019"/>
        <dbReference type="ChEBI" id="CHEBI:37563"/>
        <dbReference type="ChEBI" id="CHEBI:83071"/>
        <dbReference type="ChEBI" id="CHEBI:195187"/>
    </reaction>
    <physiologicalReaction direction="left-to-right" evidence="1">
        <dbReference type="Rhea" id="RHEA:76236"/>
    </physiologicalReaction>
</comment>
<comment type="cofactor">
    <cofactor evidence="1">
        <name>Mg(2+)</name>
        <dbReference type="ChEBI" id="CHEBI:18420"/>
    </cofactor>
    <text evidence="1">Magnesium is required for nucleotidyltransferase activity.</text>
</comment>
<comment type="cofactor">
    <cofactor evidence="1">
        <name>Ni(2+)</name>
        <dbReference type="ChEBI" id="CHEBI:49786"/>
    </cofactor>
    <text evidence="1">Nickel for phosphatase activity.</text>
</comment>
<comment type="subunit">
    <text evidence="1">Monomer. Can also form homodimers and oligomers.</text>
</comment>
<comment type="domain">
    <text evidence="1">Comprises two domains: an N-terminal domain containing the nucleotidyltransferase activity and a C-terminal HD domain associated with both phosphodiesterase and phosphatase activities.</text>
</comment>
<comment type="miscellaneous">
    <text evidence="1">A single active site specifically recognizes both ATP and CTP and is responsible for their addition.</text>
</comment>
<comment type="similarity">
    <text evidence="1">Belongs to the tRNA nucleotidyltransferase/poly(A) polymerase family. Bacterial CCA-adding enzyme type 1 subfamily.</text>
</comment>
<organism>
    <name type="scientific">Shewanella sp. (strain ANA-3)</name>
    <dbReference type="NCBI Taxonomy" id="94122"/>
    <lineage>
        <taxon>Bacteria</taxon>
        <taxon>Pseudomonadati</taxon>
        <taxon>Pseudomonadota</taxon>
        <taxon>Gammaproteobacteria</taxon>
        <taxon>Alteromonadales</taxon>
        <taxon>Shewanellaceae</taxon>
        <taxon>Shewanella</taxon>
    </lineage>
</organism>
<evidence type="ECO:0000255" key="1">
    <source>
        <dbReference type="HAMAP-Rule" id="MF_01261"/>
    </source>
</evidence>
<feature type="chain" id="PRO_1000054296" description="Multifunctional CCA protein">
    <location>
        <begin position="1"/>
        <end position="416"/>
    </location>
</feature>
<feature type="domain" description="HD" evidence="1">
    <location>
        <begin position="228"/>
        <end position="329"/>
    </location>
</feature>
<feature type="binding site" evidence="1">
    <location>
        <position position="8"/>
    </location>
    <ligand>
        <name>ATP</name>
        <dbReference type="ChEBI" id="CHEBI:30616"/>
    </ligand>
</feature>
<feature type="binding site" evidence="1">
    <location>
        <position position="8"/>
    </location>
    <ligand>
        <name>CTP</name>
        <dbReference type="ChEBI" id="CHEBI:37563"/>
    </ligand>
</feature>
<feature type="binding site" evidence="1">
    <location>
        <position position="11"/>
    </location>
    <ligand>
        <name>ATP</name>
        <dbReference type="ChEBI" id="CHEBI:30616"/>
    </ligand>
</feature>
<feature type="binding site" evidence="1">
    <location>
        <position position="11"/>
    </location>
    <ligand>
        <name>CTP</name>
        <dbReference type="ChEBI" id="CHEBI:37563"/>
    </ligand>
</feature>
<feature type="binding site" evidence="1">
    <location>
        <position position="21"/>
    </location>
    <ligand>
        <name>Mg(2+)</name>
        <dbReference type="ChEBI" id="CHEBI:18420"/>
    </ligand>
</feature>
<feature type="binding site" evidence="1">
    <location>
        <position position="23"/>
    </location>
    <ligand>
        <name>Mg(2+)</name>
        <dbReference type="ChEBI" id="CHEBI:18420"/>
    </ligand>
</feature>
<feature type="binding site" evidence="1">
    <location>
        <position position="91"/>
    </location>
    <ligand>
        <name>ATP</name>
        <dbReference type="ChEBI" id="CHEBI:30616"/>
    </ligand>
</feature>
<feature type="binding site" evidence="1">
    <location>
        <position position="91"/>
    </location>
    <ligand>
        <name>CTP</name>
        <dbReference type="ChEBI" id="CHEBI:37563"/>
    </ligand>
</feature>
<feature type="binding site" evidence="1">
    <location>
        <position position="137"/>
    </location>
    <ligand>
        <name>ATP</name>
        <dbReference type="ChEBI" id="CHEBI:30616"/>
    </ligand>
</feature>
<feature type="binding site" evidence="1">
    <location>
        <position position="137"/>
    </location>
    <ligand>
        <name>CTP</name>
        <dbReference type="ChEBI" id="CHEBI:37563"/>
    </ligand>
</feature>
<feature type="binding site" evidence="1">
    <location>
        <position position="140"/>
    </location>
    <ligand>
        <name>ATP</name>
        <dbReference type="ChEBI" id="CHEBI:30616"/>
    </ligand>
</feature>
<feature type="binding site" evidence="1">
    <location>
        <position position="140"/>
    </location>
    <ligand>
        <name>CTP</name>
        <dbReference type="ChEBI" id="CHEBI:37563"/>
    </ligand>
</feature>
<gene>
    <name evidence="1" type="primary">cca</name>
    <name type="ordered locus">Shewana3_3076</name>
</gene>
<sequence>MKIYLVGGAVRDSLLNLPIKDKDFMVVGATPEQMQQLGYRQVGKDFPVFLHPKTQQEYALARTERKVGLGYGGFSCYASPDVTLEQDLLRRDLTINAIAQDEAGNLYDPYHGIADINARQLRHVSAAFAEDPLRVLRVARFAARFHDLGFEIAAETMALMQHMSQTEELTALTPERVWQEVDKSLGGPHPEVFFEVLRQCGALNILFPEIEALFGVPQPEKWHPEIDTGLHTMLVLAQASSLTEEKAVRFAALVHDLGKALSPKEHWPKHHGHGQKGLPVIKSLCERLRIPNEYRDLALLVSDQHQNVHQAFELRSETIIKLFDKADFWRKPERLEQLLLACIADMRGRTGFEHHAYPQGDYLSACFSAASSVDVKAIIAAGFQGAQIKQALNSKRIEVVEQVKLNWQQSQTKQTP</sequence>
<dbReference type="EC" id="2.7.7.72" evidence="1"/>
<dbReference type="EC" id="3.1.3.-" evidence="1"/>
<dbReference type="EC" id="3.1.4.-" evidence="1"/>
<dbReference type="EMBL" id="CP000469">
    <property type="protein sequence ID" value="ABK49300.1"/>
    <property type="molecule type" value="Genomic_DNA"/>
</dbReference>
<dbReference type="RefSeq" id="WP_011717917.1">
    <property type="nucleotide sequence ID" value="NC_008577.1"/>
</dbReference>
<dbReference type="SMR" id="A0KZT1"/>
<dbReference type="STRING" id="94122.Shewana3_3076"/>
<dbReference type="KEGG" id="shn:Shewana3_3076"/>
<dbReference type="eggNOG" id="COG0617">
    <property type="taxonomic scope" value="Bacteria"/>
</dbReference>
<dbReference type="HOGENOM" id="CLU_015961_1_1_6"/>
<dbReference type="OrthoDB" id="9805698at2"/>
<dbReference type="Proteomes" id="UP000002589">
    <property type="component" value="Chromosome"/>
</dbReference>
<dbReference type="GO" id="GO:0005524">
    <property type="term" value="F:ATP binding"/>
    <property type="evidence" value="ECO:0007669"/>
    <property type="project" value="UniProtKB-UniRule"/>
</dbReference>
<dbReference type="GO" id="GO:0004810">
    <property type="term" value="F:CCA tRNA nucleotidyltransferase activity"/>
    <property type="evidence" value="ECO:0007669"/>
    <property type="project" value="UniProtKB-UniRule"/>
</dbReference>
<dbReference type="GO" id="GO:0004112">
    <property type="term" value="F:cyclic-nucleotide phosphodiesterase activity"/>
    <property type="evidence" value="ECO:0007669"/>
    <property type="project" value="UniProtKB-UniRule"/>
</dbReference>
<dbReference type="GO" id="GO:0000287">
    <property type="term" value="F:magnesium ion binding"/>
    <property type="evidence" value="ECO:0007669"/>
    <property type="project" value="UniProtKB-UniRule"/>
</dbReference>
<dbReference type="GO" id="GO:0016791">
    <property type="term" value="F:phosphatase activity"/>
    <property type="evidence" value="ECO:0007669"/>
    <property type="project" value="UniProtKB-UniRule"/>
</dbReference>
<dbReference type="GO" id="GO:0000049">
    <property type="term" value="F:tRNA binding"/>
    <property type="evidence" value="ECO:0007669"/>
    <property type="project" value="UniProtKB-UniRule"/>
</dbReference>
<dbReference type="GO" id="GO:0042245">
    <property type="term" value="P:RNA repair"/>
    <property type="evidence" value="ECO:0007669"/>
    <property type="project" value="UniProtKB-KW"/>
</dbReference>
<dbReference type="GO" id="GO:0001680">
    <property type="term" value="P:tRNA 3'-terminal CCA addition"/>
    <property type="evidence" value="ECO:0007669"/>
    <property type="project" value="UniProtKB-UniRule"/>
</dbReference>
<dbReference type="CDD" id="cd00077">
    <property type="entry name" value="HDc"/>
    <property type="match status" value="1"/>
</dbReference>
<dbReference type="CDD" id="cd05398">
    <property type="entry name" value="NT_ClassII-CCAase"/>
    <property type="match status" value="1"/>
</dbReference>
<dbReference type="FunFam" id="1.10.3090.10:FF:000001">
    <property type="entry name" value="Multifunctional CCA protein"/>
    <property type="match status" value="1"/>
</dbReference>
<dbReference type="Gene3D" id="3.30.460.10">
    <property type="entry name" value="Beta Polymerase, domain 2"/>
    <property type="match status" value="1"/>
</dbReference>
<dbReference type="Gene3D" id="1.10.3090.10">
    <property type="entry name" value="cca-adding enzyme, domain 2"/>
    <property type="match status" value="1"/>
</dbReference>
<dbReference type="HAMAP" id="MF_01261">
    <property type="entry name" value="CCA_bact_type1"/>
    <property type="match status" value="1"/>
</dbReference>
<dbReference type="HAMAP" id="MF_01262">
    <property type="entry name" value="CCA_bact_type2"/>
    <property type="match status" value="1"/>
</dbReference>
<dbReference type="InterPro" id="IPR012006">
    <property type="entry name" value="CCA_bact"/>
</dbReference>
<dbReference type="InterPro" id="IPR003607">
    <property type="entry name" value="HD/PDEase_dom"/>
</dbReference>
<dbReference type="InterPro" id="IPR006674">
    <property type="entry name" value="HD_domain"/>
</dbReference>
<dbReference type="InterPro" id="IPR043519">
    <property type="entry name" value="NT_sf"/>
</dbReference>
<dbReference type="InterPro" id="IPR002646">
    <property type="entry name" value="PolA_pol_head_dom"/>
</dbReference>
<dbReference type="InterPro" id="IPR032828">
    <property type="entry name" value="PolyA_RNA-bd"/>
</dbReference>
<dbReference type="InterPro" id="IPR050124">
    <property type="entry name" value="tRNA_CCA-adding_enzyme"/>
</dbReference>
<dbReference type="NCBIfam" id="NF008137">
    <property type="entry name" value="PRK10885.1"/>
    <property type="match status" value="1"/>
</dbReference>
<dbReference type="PANTHER" id="PTHR47545">
    <property type="entry name" value="MULTIFUNCTIONAL CCA PROTEIN"/>
    <property type="match status" value="1"/>
</dbReference>
<dbReference type="PANTHER" id="PTHR47545:SF1">
    <property type="entry name" value="MULTIFUNCTIONAL CCA PROTEIN"/>
    <property type="match status" value="1"/>
</dbReference>
<dbReference type="Pfam" id="PF01966">
    <property type="entry name" value="HD"/>
    <property type="match status" value="1"/>
</dbReference>
<dbReference type="Pfam" id="PF01743">
    <property type="entry name" value="PolyA_pol"/>
    <property type="match status" value="1"/>
</dbReference>
<dbReference type="Pfam" id="PF12627">
    <property type="entry name" value="PolyA_pol_RNAbd"/>
    <property type="match status" value="1"/>
</dbReference>
<dbReference type="PIRSF" id="PIRSF000813">
    <property type="entry name" value="CCA_bact"/>
    <property type="match status" value="1"/>
</dbReference>
<dbReference type="SUPFAM" id="SSF81301">
    <property type="entry name" value="Nucleotidyltransferase"/>
    <property type="match status" value="1"/>
</dbReference>
<dbReference type="SUPFAM" id="SSF81891">
    <property type="entry name" value="Poly A polymerase C-terminal region-like"/>
    <property type="match status" value="1"/>
</dbReference>
<dbReference type="PROSITE" id="PS51831">
    <property type="entry name" value="HD"/>
    <property type="match status" value="1"/>
</dbReference>
<proteinExistence type="inferred from homology"/>